<accession>O86576</accession>
<organism>
    <name type="scientific">Streptomyces coelicolor (strain ATCC BAA-471 / A3(2) / M145)</name>
    <dbReference type="NCBI Taxonomy" id="100226"/>
    <lineage>
        <taxon>Bacteria</taxon>
        <taxon>Bacillati</taxon>
        <taxon>Actinomycetota</taxon>
        <taxon>Actinomycetes</taxon>
        <taxon>Kitasatosporales</taxon>
        <taxon>Streptomycetaceae</taxon>
        <taxon>Streptomyces</taxon>
        <taxon>Streptomyces albidoflavus group</taxon>
    </lineage>
</organism>
<feature type="chain" id="PRO_0000166307" description="UPF0126 membrane protein SCO5481">
    <location>
        <begin position="1"/>
        <end position="219"/>
    </location>
</feature>
<feature type="transmembrane region" description="Helical" evidence="1">
    <location>
        <begin position="10"/>
        <end position="30"/>
    </location>
</feature>
<feature type="transmembrane region" description="Helical" evidence="1">
    <location>
        <begin position="34"/>
        <end position="54"/>
    </location>
</feature>
<feature type="transmembrane region" description="Helical" evidence="1">
    <location>
        <begin position="66"/>
        <end position="86"/>
    </location>
</feature>
<feature type="transmembrane region" description="Helical" evidence="1">
    <location>
        <begin position="93"/>
        <end position="113"/>
    </location>
</feature>
<feature type="transmembrane region" description="Helical" evidence="1">
    <location>
        <begin position="120"/>
        <end position="140"/>
    </location>
</feature>
<feature type="transmembrane region" description="Helical" evidence="1">
    <location>
        <begin position="158"/>
        <end position="178"/>
    </location>
</feature>
<dbReference type="EMBL" id="AL939123">
    <property type="protein sequence ID" value="CAA20184.1"/>
    <property type="molecule type" value="Genomic_DNA"/>
</dbReference>
<dbReference type="PIR" id="T34761">
    <property type="entry name" value="T34761"/>
</dbReference>
<dbReference type="RefSeq" id="NP_629617.1">
    <property type="nucleotide sequence ID" value="NC_003888.3"/>
</dbReference>
<dbReference type="RefSeq" id="WP_003973517.1">
    <property type="nucleotide sequence ID" value="NZ_VNID01000011.1"/>
</dbReference>
<dbReference type="SMR" id="O86576"/>
<dbReference type="STRING" id="100226.gene:17763133"/>
<dbReference type="PaxDb" id="100226-SCO5481"/>
<dbReference type="KEGG" id="sco:SCO5481"/>
<dbReference type="PATRIC" id="fig|100226.15.peg.5565"/>
<dbReference type="eggNOG" id="COG2860">
    <property type="taxonomic scope" value="Bacteria"/>
</dbReference>
<dbReference type="HOGENOM" id="CLU_064906_1_1_11"/>
<dbReference type="InParanoid" id="O86576"/>
<dbReference type="OrthoDB" id="9791874at2"/>
<dbReference type="PhylomeDB" id="O86576"/>
<dbReference type="Proteomes" id="UP000001973">
    <property type="component" value="Chromosome"/>
</dbReference>
<dbReference type="GO" id="GO:0005886">
    <property type="term" value="C:plasma membrane"/>
    <property type="evidence" value="ECO:0000318"/>
    <property type="project" value="GO_Central"/>
</dbReference>
<dbReference type="InterPro" id="IPR005115">
    <property type="entry name" value="Gly_transporter"/>
</dbReference>
<dbReference type="PANTHER" id="PTHR30506">
    <property type="entry name" value="INNER MEMBRANE PROTEIN"/>
    <property type="match status" value="1"/>
</dbReference>
<dbReference type="PANTHER" id="PTHR30506:SF3">
    <property type="entry name" value="UPF0126 INNER MEMBRANE PROTEIN YADS-RELATED"/>
    <property type="match status" value="1"/>
</dbReference>
<dbReference type="Pfam" id="PF03458">
    <property type="entry name" value="Gly_transporter"/>
    <property type="match status" value="2"/>
</dbReference>
<protein>
    <recommendedName>
        <fullName>UPF0126 membrane protein SCO5481</fullName>
    </recommendedName>
</protein>
<reference key="1">
    <citation type="journal article" date="2002" name="Nature">
        <title>Complete genome sequence of the model actinomycete Streptomyces coelicolor A3(2).</title>
        <authorList>
            <person name="Bentley S.D."/>
            <person name="Chater K.F."/>
            <person name="Cerdeno-Tarraga A.-M."/>
            <person name="Challis G.L."/>
            <person name="Thomson N.R."/>
            <person name="James K.D."/>
            <person name="Harris D.E."/>
            <person name="Quail M.A."/>
            <person name="Kieser H."/>
            <person name="Harper D."/>
            <person name="Bateman A."/>
            <person name="Brown S."/>
            <person name="Chandra G."/>
            <person name="Chen C.W."/>
            <person name="Collins M."/>
            <person name="Cronin A."/>
            <person name="Fraser A."/>
            <person name="Goble A."/>
            <person name="Hidalgo J."/>
            <person name="Hornsby T."/>
            <person name="Howarth S."/>
            <person name="Huang C.-H."/>
            <person name="Kieser T."/>
            <person name="Larke L."/>
            <person name="Murphy L.D."/>
            <person name="Oliver K."/>
            <person name="O'Neil S."/>
            <person name="Rabbinowitsch E."/>
            <person name="Rajandream M.A."/>
            <person name="Rutherford K.M."/>
            <person name="Rutter S."/>
            <person name="Seeger K."/>
            <person name="Saunders D."/>
            <person name="Sharp S."/>
            <person name="Squares R."/>
            <person name="Squares S."/>
            <person name="Taylor K."/>
            <person name="Warren T."/>
            <person name="Wietzorrek A."/>
            <person name="Woodward J.R."/>
            <person name="Barrell B.G."/>
            <person name="Parkhill J."/>
            <person name="Hopwood D.A."/>
        </authorList>
    </citation>
    <scope>NUCLEOTIDE SEQUENCE [LARGE SCALE GENOMIC DNA]</scope>
    <source>
        <strain>ATCC BAA-471 / A3(2) / M145</strain>
    </source>
</reference>
<name>Y5481_STRCO</name>
<comment type="subcellular location">
    <subcellularLocation>
        <location evidence="2">Cell membrane</location>
        <topology evidence="2">Multi-pass membrane protein</topology>
    </subcellularLocation>
</comment>
<comment type="similarity">
    <text evidence="2">Belongs to the UPF0126 family.</text>
</comment>
<keyword id="KW-1003">Cell membrane</keyword>
<keyword id="KW-0472">Membrane</keyword>
<keyword id="KW-1185">Reference proteome</keyword>
<keyword id="KW-0812">Transmembrane</keyword>
<keyword id="KW-1133">Transmembrane helix</keyword>
<gene>
    <name type="ordered locus">SCO5481</name>
    <name type="ORF">SC2A11.15</name>
</gene>
<proteinExistence type="inferred from homology"/>
<sequence>MYEQLFSPTVQHTLDLVGIFVFAISGALLAVRKNFDVFGIAVLAEVTALGGGLFRDLVIGAVPPAAFTDLGYFLTPLLATLLVFFLHPHVERLQTGVNIFDAAGLGLFCVAGTTKAYDYGLGLTASACLGLTTAVGGGVLRDVLANEVPSLLRWDRDLYAVPAIVGSAMVALCIRYEALTPFTSGLAVVTAFVLRLLALRFHWRAPRAWNRRSTVVEGD</sequence>
<evidence type="ECO:0000255" key="1"/>
<evidence type="ECO:0000305" key="2"/>